<gene>
    <name evidence="1" type="primary">rpsU</name>
    <name type="ordered locus">ECDH10B_3240</name>
</gene>
<accession>B1XG70</accession>
<dbReference type="EMBL" id="CP000948">
    <property type="protein sequence ID" value="ACB04150.1"/>
    <property type="molecule type" value="Genomic_DNA"/>
</dbReference>
<dbReference type="RefSeq" id="WP_001144069.1">
    <property type="nucleotide sequence ID" value="NC_010473.1"/>
</dbReference>
<dbReference type="SMR" id="B1XG70"/>
<dbReference type="GeneID" id="98390195"/>
<dbReference type="KEGG" id="ecd:ECDH10B_3240"/>
<dbReference type="HOGENOM" id="CLU_159258_1_0_6"/>
<dbReference type="GO" id="GO:1990904">
    <property type="term" value="C:ribonucleoprotein complex"/>
    <property type="evidence" value="ECO:0007669"/>
    <property type="project" value="UniProtKB-KW"/>
</dbReference>
<dbReference type="GO" id="GO:0005840">
    <property type="term" value="C:ribosome"/>
    <property type="evidence" value="ECO:0007669"/>
    <property type="project" value="UniProtKB-KW"/>
</dbReference>
<dbReference type="GO" id="GO:0003735">
    <property type="term" value="F:structural constituent of ribosome"/>
    <property type="evidence" value="ECO:0007669"/>
    <property type="project" value="InterPro"/>
</dbReference>
<dbReference type="GO" id="GO:0006412">
    <property type="term" value="P:translation"/>
    <property type="evidence" value="ECO:0007669"/>
    <property type="project" value="UniProtKB-UniRule"/>
</dbReference>
<dbReference type="FunFam" id="1.20.5.1150:FF:000001">
    <property type="entry name" value="30S ribosomal protein S21"/>
    <property type="match status" value="1"/>
</dbReference>
<dbReference type="Gene3D" id="1.20.5.1150">
    <property type="entry name" value="Ribosomal protein S8"/>
    <property type="match status" value="1"/>
</dbReference>
<dbReference type="HAMAP" id="MF_00358">
    <property type="entry name" value="Ribosomal_bS21"/>
    <property type="match status" value="1"/>
</dbReference>
<dbReference type="InterPro" id="IPR001911">
    <property type="entry name" value="Ribosomal_bS21"/>
</dbReference>
<dbReference type="InterPro" id="IPR018278">
    <property type="entry name" value="Ribosomal_bS21_CS"/>
</dbReference>
<dbReference type="InterPro" id="IPR038380">
    <property type="entry name" value="Ribosomal_bS21_sf"/>
</dbReference>
<dbReference type="NCBIfam" id="TIGR00030">
    <property type="entry name" value="S21p"/>
    <property type="match status" value="1"/>
</dbReference>
<dbReference type="PANTHER" id="PTHR21109">
    <property type="entry name" value="MITOCHONDRIAL 28S RIBOSOMAL PROTEIN S21"/>
    <property type="match status" value="1"/>
</dbReference>
<dbReference type="PANTHER" id="PTHR21109:SF22">
    <property type="entry name" value="SMALL RIBOSOMAL SUBUNIT PROTEIN BS21"/>
    <property type="match status" value="1"/>
</dbReference>
<dbReference type="Pfam" id="PF01165">
    <property type="entry name" value="Ribosomal_S21"/>
    <property type="match status" value="1"/>
</dbReference>
<dbReference type="PRINTS" id="PR00976">
    <property type="entry name" value="RIBOSOMALS21"/>
</dbReference>
<dbReference type="PROSITE" id="PS01181">
    <property type="entry name" value="RIBOSOMAL_S21"/>
    <property type="match status" value="1"/>
</dbReference>
<name>RS21_ECODH</name>
<protein>
    <recommendedName>
        <fullName evidence="1">Small ribosomal subunit protein bS21</fullName>
    </recommendedName>
    <alternativeName>
        <fullName evidence="3">30S ribosomal protein S21</fullName>
    </alternativeName>
</protein>
<organism>
    <name type="scientific">Escherichia coli (strain K12 / DH10B)</name>
    <dbReference type="NCBI Taxonomy" id="316385"/>
    <lineage>
        <taxon>Bacteria</taxon>
        <taxon>Pseudomonadati</taxon>
        <taxon>Pseudomonadota</taxon>
        <taxon>Gammaproteobacteria</taxon>
        <taxon>Enterobacterales</taxon>
        <taxon>Enterobacteriaceae</taxon>
        <taxon>Escherichia</taxon>
    </lineage>
</organism>
<comment type="similarity">
    <text evidence="1">Belongs to the bacterial ribosomal protein bS21 family.</text>
</comment>
<sequence>MPVIKVRENEPFDVALRRFKRSCEKAGVLAEVRRREFYEKPTTERKRAKASAVKRHAKKLARENARRTRLY</sequence>
<feature type="chain" id="PRO_1000120616" description="Small ribosomal subunit protein bS21">
    <location>
        <begin position="1"/>
        <end position="71"/>
    </location>
</feature>
<feature type="region of interest" description="Disordered" evidence="2">
    <location>
        <begin position="43"/>
        <end position="71"/>
    </location>
</feature>
<feature type="compositionally biased region" description="Basic residues" evidence="2">
    <location>
        <begin position="46"/>
        <end position="59"/>
    </location>
</feature>
<feature type="compositionally biased region" description="Basic and acidic residues" evidence="2">
    <location>
        <begin position="60"/>
        <end position="71"/>
    </location>
</feature>
<keyword id="KW-0687">Ribonucleoprotein</keyword>
<keyword id="KW-0689">Ribosomal protein</keyword>
<proteinExistence type="inferred from homology"/>
<reference key="1">
    <citation type="journal article" date="2008" name="J. Bacteriol.">
        <title>The complete genome sequence of Escherichia coli DH10B: insights into the biology of a laboratory workhorse.</title>
        <authorList>
            <person name="Durfee T."/>
            <person name="Nelson R."/>
            <person name="Baldwin S."/>
            <person name="Plunkett G. III"/>
            <person name="Burland V."/>
            <person name="Mau B."/>
            <person name="Petrosino J.F."/>
            <person name="Qin X."/>
            <person name="Muzny D.M."/>
            <person name="Ayele M."/>
            <person name="Gibbs R.A."/>
            <person name="Csorgo B."/>
            <person name="Posfai G."/>
            <person name="Weinstock G.M."/>
            <person name="Blattner F.R."/>
        </authorList>
    </citation>
    <scope>NUCLEOTIDE SEQUENCE [LARGE SCALE GENOMIC DNA]</scope>
    <source>
        <strain>K12 / DH10B</strain>
    </source>
</reference>
<evidence type="ECO:0000255" key="1">
    <source>
        <dbReference type="HAMAP-Rule" id="MF_00358"/>
    </source>
</evidence>
<evidence type="ECO:0000256" key="2">
    <source>
        <dbReference type="SAM" id="MobiDB-lite"/>
    </source>
</evidence>
<evidence type="ECO:0000305" key="3"/>